<reference key="1">
    <citation type="journal article" date="1992" name="EMBO J.">
        <title>GAC1 may encode a regulatory subunit for protein phosphatase type 1 in Saccharomyces cerevisiae.</title>
        <authorList>
            <person name="Francois J.M."/>
            <person name="Thompson-Jaeger S."/>
            <person name="Skroch J."/>
            <person name="Zellenka U."/>
            <person name="Spevak W."/>
            <person name="Tatchell K."/>
        </authorList>
    </citation>
    <scope>NUCLEOTIDE SEQUENCE [GENOMIC DNA]</scope>
</reference>
<reference key="2">
    <citation type="journal article" date="1997" name="Nature">
        <title>The nucleotide sequence of Saccharomyces cerevisiae chromosome XV.</title>
        <authorList>
            <person name="Dujon B."/>
            <person name="Albermann K."/>
            <person name="Aldea M."/>
            <person name="Alexandraki D."/>
            <person name="Ansorge W."/>
            <person name="Arino J."/>
            <person name="Benes V."/>
            <person name="Bohn C."/>
            <person name="Bolotin-Fukuhara M."/>
            <person name="Bordonne R."/>
            <person name="Boyer J."/>
            <person name="Camasses A."/>
            <person name="Casamayor A."/>
            <person name="Casas C."/>
            <person name="Cheret G."/>
            <person name="Cziepluch C."/>
            <person name="Daignan-Fornier B."/>
            <person name="Dang V.-D."/>
            <person name="de Haan M."/>
            <person name="Delius H."/>
            <person name="Durand P."/>
            <person name="Fairhead C."/>
            <person name="Feldmann H."/>
            <person name="Gaillon L."/>
            <person name="Galisson F."/>
            <person name="Gamo F.-J."/>
            <person name="Gancedo C."/>
            <person name="Goffeau A."/>
            <person name="Goulding S.E."/>
            <person name="Grivell L.A."/>
            <person name="Habbig B."/>
            <person name="Hand N.J."/>
            <person name="Hani J."/>
            <person name="Hattenhorst U."/>
            <person name="Hebling U."/>
            <person name="Hernando Y."/>
            <person name="Herrero E."/>
            <person name="Heumann K."/>
            <person name="Hiesel R."/>
            <person name="Hilger F."/>
            <person name="Hofmann B."/>
            <person name="Hollenberg C.P."/>
            <person name="Hughes B."/>
            <person name="Jauniaux J.-C."/>
            <person name="Kalogeropoulos A."/>
            <person name="Katsoulou C."/>
            <person name="Kordes E."/>
            <person name="Lafuente M.J."/>
            <person name="Landt O."/>
            <person name="Louis E.J."/>
            <person name="Maarse A.C."/>
            <person name="Madania A."/>
            <person name="Mannhaupt G."/>
            <person name="Marck C."/>
            <person name="Martin R.P."/>
            <person name="Mewes H.-W."/>
            <person name="Michaux G."/>
            <person name="Paces V."/>
            <person name="Parle-McDermott A.G."/>
            <person name="Pearson B.M."/>
            <person name="Perrin A."/>
            <person name="Pettersson B."/>
            <person name="Poch O."/>
            <person name="Pohl T.M."/>
            <person name="Poirey R."/>
            <person name="Portetelle D."/>
            <person name="Pujol A."/>
            <person name="Purnelle B."/>
            <person name="Ramezani Rad M."/>
            <person name="Rechmann S."/>
            <person name="Schwager C."/>
            <person name="Schweizer M."/>
            <person name="Sor F."/>
            <person name="Sterky F."/>
            <person name="Tarassov I.A."/>
            <person name="Teodoru C."/>
            <person name="Tettelin H."/>
            <person name="Thierry A."/>
            <person name="Tobiasch E."/>
            <person name="Tzermia M."/>
            <person name="Uhlen M."/>
            <person name="Unseld M."/>
            <person name="Valens M."/>
            <person name="Vandenbol M."/>
            <person name="Vetter I."/>
            <person name="Vlcek C."/>
            <person name="Voet M."/>
            <person name="Volckaert G."/>
            <person name="Voss H."/>
            <person name="Wambutt R."/>
            <person name="Wedler H."/>
            <person name="Wiemann S."/>
            <person name="Winsor B."/>
            <person name="Wolfe K.H."/>
            <person name="Zollner A."/>
            <person name="Zumstein E."/>
            <person name="Kleine K."/>
        </authorList>
    </citation>
    <scope>NUCLEOTIDE SEQUENCE [LARGE SCALE GENOMIC DNA]</scope>
    <source>
        <strain>ATCC 204508 / S288c</strain>
    </source>
</reference>
<reference key="3">
    <citation type="journal article" date="2014" name="G3 (Bethesda)">
        <title>The reference genome sequence of Saccharomyces cerevisiae: Then and now.</title>
        <authorList>
            <person name="Engel S.R."/>
            <person name="Dietrich F.S."/>
            <person name="Fisk D.G."/>
            <person name="Binkley G."/>
            <person name="Balakrishnan R."/>
            <person name="Costanzo M.C."/>
            <person name="Dwight S.S."/>
            <person name="Hitz B.C."/>
            <person name="Karra K."/>
            <person name="Nash R.S."/>
            <person name="Weng S."/>
            <person name="Wong E.D."/>
            <person name="Lloyd P."/>
            <person name="Skrzypek M.S."/>
            <person name="Miyasato S.R."/>
            <person name="Simison M."/>
            <person name="Cherry J.M."/>
        </authorList>
    </citation>
    <scope>GENOME REANNOTATION</scope>
    <source>
        <strain>ATCC 204508 / S288c</strain>
    </source>
</reference>
<reference key="4">
    <citation type="journal article" date="2009" name="Science">
        <title>Global analysis of Cdk1 substrate phosphorylation sites provides insights into evolution.</title>
        <authorList>
            <person name="Holt L.J."/>
            <person name="Tuch B.B."/>
            <person name="Villen J."/>
            <person name="Johnson A.D."/>
            <person name="Gygi S.P."/>
            <person name="Morgan D.O."/>
        </authorList>
    </citation>
    <scope>PHOSPHORYLATION [LARGE SCALE ANALYSIS] AT SER-415 AND SER-424</scope>
    <scope>IDENTIFICATION BY MASS SPECTROMETRY [LARGE SCALE ANALYSIS]</scope>
</reference>
<reference key="5">
    <citation type="journal article" date="2012" name="Proc. Natl. Acad. Sci. U.S.A.">
        <title>N-terminal acetylome analyses and functional insights of the N-terminal acetyltransferase NatB.</title>
        <authorList>
            <person name="Van Damme P."/>
            <person name="Lasa M."/>
            <person name="Polevoda B."/>
            <person name="Gazquez C."/>
            <person name="Elosegui-Artola A."/>
            <person name="Kim D.S."/>
            <person name="De Juan-Pardo E."/>
            <person name="Demeyer K."/>
            <person name="Hole K."/>
            <person name="Larrea E."/>
            <person name="Timmerman E."/>
            <person name="Prieto J."/>
            <person name="Arnesen T."/>
            <person name="Sherman F."/>
            <person name="Gevaert K."/>
            <person name="Aldabe R."/>
        </authorList>
    </citation>
    <scope>IDENTIFICATION BY MASS SPECTROMETRY [LARGE SCALE ANALYSIS]</scope>
</reference>
<proteinExistence type="evidence at protein level"/>
<dbReference type="EMBL" id="X63941">
    <property type="protein sequence ID" value="CAA45371.1"/>
    <property type="molecule type" value="Genomic_DNA"/>
</dbReference>
<dbReference type="EMBL" id="Z75086">
    <property type="protein sequence ID" value="CAA99387.1"/>
    <property type="molecule type" value="Genomic_DNA"/>
</dbReference>
<dbReference type="EMBL" id="BK006948">
    <property type="protein sequence ID" value="DAA10950.1"/>
    <property type="molecule type" value="Genomic_DNA"/>
</dbReference>
<dbReference type="PIR" id="S67070">
    <property type="entry name" value="S67070"/>
</dbReference>
<dbReference type="RefSeq" id="NP_014821.3">
    <property type="nucleotide sequence ID" value="NM_001183597.3"/>
</dbReference>
<dbReference type="SMR" id="P28006"/>
<dbReference type="BioGRID" id="34573">
    <property type="interactions" value="62"/>
</dbReference>
<dbReference type="ComplexPortal" id="CPX-1231">
    <property type="entry name" value="GAC1-GLC7 phosphatase complex"/>
</dbReference>
<dbReference type="DIP" id="DIP-2375N"/>
<dbReference type="ELM" id="P28006"/>
<dbReference type="FunCoup" id="P28006">
    <property type="interactions" value="234"/>
</dbReference>
<dbReference type="IntAct" id="P28006">
    <property type="interactions" value="21"/>
</dbReference>
<dbReference type="MINT" id="P28006"/>
<dbReference type="STRING" id="4932.YOR178C"/>
<dbReference type="CAZy" id="CBM21">
    <property type="family name" value="Carbohydrate-Binding Module Family 21"/>
</dbReference>
<dbReference type="iPTMnet" id="P28006"/>
<dbReference type="PaxDb" id="4932-YOR178C"/>
<dbReference type="PeptideAtlas" id="P28006"/>
<dbReference type="EnsemblFungi" id="YOR178C_mRNA">
    <property type="protein sequence ID" value="YOR178C"/>
    <property type="gene ID" value="YOR178C"/>
</dbReference>
<dbReference type="GeneID" id="854350"/>
<dbReference type="KEGG" id="sce:YOR178C"/>
<dbReference type="AGR" id="SGD:S000005704"/>
<dbReference type="SGD" id="S000005704">
    <property type="gene designation" value="GAC1"/>
</dbReference>
<dbReference type="VEuPathDB" id="FungiDB:YOR178C"/>
<dbReference type="eggNOG" id="KOG3986">
    <property type="taxonomic scope" value="Eukaryota"/>
</dbReference>
<dbReference type="GeneTree" id="ENSGT00940000176558"/>
<dbReference type="HOGENOM" id="CLU_014598_0_0_1"/>
<dbReference type="InParanoid" id="P28006"/>
<dbReference type="OMA" id="HINSQAE"/>
<dbReference type="OrthoDB" id="1881at2759"/>
<dbReference type="BioCyc" id="YEAST:G3O-33690-MONOMER"/>
<dbReference type="Reactome" id="R-SCE-3322077">
    <property type="pathway name" value="Glycogen synthesis"/>
</dbReference>
<dbReference type="BioGRID-ORCS" id="854350">
    <property type="hits" value="3 hits in 10 CRISPR screens"/>
</dbReference>
<dbReference type="PRO" id="PR:P28006"/>
<dbReference type="Proteomes" id="UP000002311">
    <property type="component" value="Chromosome XV"/>
</dbReference>
<dbReference type="RNAct" id="P28006">
    <property type="molecule type" value="protein"/>
</dbReference>
<dbReference type="GO" id="GO:0000164">
    <property type="term" value="C:protein phosphatase type 1 complex"/>
    <property type="evidence" value="ECO:0000314"/>
    <property type="project" value="ComplexPortal"/>
</dbReference>
<dbReference type="GO" id="GO:2001069">
    <property type="term" value="F:glycogen binding"/>
    <property type="evidence" value="ECO:0000318"/>
    <property type="project" value="GO_Central"/>
</dbReference>
<dbReference type="GO" id="GO:0031072">
    <property type="term" value="F:heat shock protein binding"/>
    <property type="evidence" value="ECO:0000314"/>
    <property type="project" value="SGD"/>
</dbReference>
<dbReference type="GO" id="GO:0008157">
    <property type="term" value="F:protein phosphatase 1 binding"/>
    <property type="evidence" value="ECO:0000318"/>
    <property type="project" value="GO_Central"/>
</dbReference>
<dbReference type="GO" id="GO:0019888">
    <property type="term" value="F:protein phosphatase regulator activity"/>
    <property type="evidence" value="ECO:0000315"/>
    <property type="project" value="SGD"/>
</dbReference>
<dbReference type="GO" id="GO:0005978">
    <property type="term" value="P:glycogen biosynthetic process"/>
    <property type="evidence" value="ECO:0007669"/>
    <property type="project" value="UniProtKB-KW"/>
</dbReference>
<dbReference type="GO" id="GO:0005977">
    <property type="term" value="P:glycogen metabolic process"/>
    <property type="evidence" value="ECO:0000353"/>
    <property type="project" value="SGD"/>
</dbReference>
<dbReference type="GO" id="GO:0051321">
    <property type="term" value="P:meiotic cell cycle"/>
    <property type="evidence" value="ECO:0000353"/>
    <property type="project" value="SGD"/>
</dbReference>
<dbReference type="GO" id="GO:0007094">
    <property type="term" value="P:mitotic spindle assembly checkpoint signaling"/>
    <property type="evidence" value="ECO:0000315"/>
    <property type="project" value="SGD"/>
</dbReference>
<dbReference type="GO" id="GO:0005979">
    <property type="term" value="P:regulation of glycogen biosynthetic process"/>
    <property type="evidence" value="ECO:0000318"/>
    <property type="project" value="GO_Central"/>
</dbReference>
<dbReference type="GO" id="GO:0009408">
    <property type="term" value="P:response to heat"/>
    <property type="evidence" value="ECO:0000315"/>
    <property type="project" value="SGD"/>
</dbReference>
<dbReference type="Gene3D" id="2.60.40.2440">
    <property type="entry name" value="Carbohydrate binding type-21 domain"/>
    <property type="match status" value="1"/>
</dbReference>
<dbReference type="InterPro" id="IPR005036">
    <property type="entry name" value="CBM21_dom"/>
</dbReference>
<dbReference type="InterPro" id="IPR038175">
    <property type="entry name" value="CBM21_dom_sf"/>
</dbReference>
<dbReference type="InterPro" id="IPR050782">
    <property type="entry name" value="PP1_regulatory_subunit_3"/>
</dbReference>
<dbReference type="PANTHER" id="PTHR12307">
    <property type="entry name" value="PROTEIN PHOSPHATASE 1 REGULATORY SUBUNIT"/>
    <property type="match status" value="1"/>
</dbReference>
<dbReference type="PANTHER" id="PTHR12307:SF51">
    <property type="entry name" value="SERINE_THREONINE-PROTEIN PHOSPHATASE 1 REGULATORY SUBUNIT GAC1-RELATED"/>
    <property type="match status" value="1"/>
</dbReference>
<dbReference type="Pfam" id="PF03370">
    <property type="entry name" value="CBM_21"/>
    <property type="match status" value="1"/>
</dbReference>
<dbReference type="PROSITE" id="PS51159">
    <property type="entry name" value="CBM21"/>
    <property type="match status" value="1"/>
</dbReference>
<protein>
    <recommendedName>
        <fullName>Serine/threonine-protein phosphatase 1 regulatory subunit GAC1</fullName>
    </recommendedName>
</protein>
<gene>
    <name type="primary">GAC1</name>
    <name type="ordered locus">YOR178C</name>
</gene>
<evidence type="ECO:0000255" key="1">
    <source>
        <dbReference type="PROSITE-ProRule" id="PRU00491"/>
    </source>
</evidence>
<evidence type="ECO:0000256" key="2">
    <source>
        <dbReference type="SAM" id="MobiDB-lite"/>
    </source>
</evidence>
<evidence type="ECO:0000305" key="3"/>
<evidence type="ECO:0007744" key="4">
    <source>
    </source>
</evidence>
<comment type="function">
    <text>Regulates the activity of glycogen synthase. It is most probably a regulatory subunit for protein phosphatase type 1.</text>
</comment>
<feature type="chain" id="PRO_0000071518" description="Serine/threonine-protein phosphatase 1 regulatory subunit GAC1">
    <location>
        <begin position="1"/>
        <end position="793"/>
    </location>
</feature>
<feature type="domain" description="CBM21" evidence="1">
    <location>
        <begin position="235"/>
        <end position="360"/>
    </location>
</feature>
<feature type="region of interest" description="Disordered" evidence="2">
    <location>
        <begin position="1"/>
        <end position="20"/>
    </location>
</feature>
<feature type="region of interest" description="Disordered" evidence="2">
    <location>
        <begin position="450"/>
        <end position="491"/>
    </location>
</feature>
<feature type="region of interest" description="Disordered" evidence="2">
    <location>
        <begin position="616"/>
        <end position="671"/>
    </location>
</feature>
<feature type="compositionally biased region" description="Polar residues" evidence="2">
    <location>
        <begin position="1"/>
        <end position="10"/>
    </location>
</feature>
<feature type="compositionally biased region" description="Polar residues" evidence="2">
    <location>
        <begin position="623"/>
        <end position="633"/>
    </location>
</feature>
<feature type="compositionally biased region" description="Basic and acidic residues" evidence="2">
    <location>
        <begin position="637"/>
        <end position="648"/>
    </location>
</feature>
<feature type="compositionally biased region" description="Low complexity" evidence="2">
    <location>
        <begin position="649"/>
        <end position="665"/>
    </location>
</feature>
<feature type="modified residue" description="Phosphoserine" evidence="4">
    <location>
        <position position="415"/>
    </location>
</feature>
<feature type="modified residue" description="Phosphoserine" evidence="4">
    <location>
        <position position="424"/>
    </location>
</feature>
<feature type="sequence conflict" description="In Ref. 1; CAA45371." evidence="3" ref="1">
    <original>S</original>
    <variation>SS</variation>
    <location>
        <position position="228"/>
    </location>
</feature>
<name>GAC1_YEAST</name>
<organism>
    <name type="scientific">Saccharomyces cerevisiae (strain ATCC 204508 / S288c)</name>
    <name type="common">Baker's yeast</name>
    <dbReference type="NCBI Taxonomy" id="559292"/>
    <lineage>
        <taxon>Eukaryota</taxon>
        <taxon>Fungi</taxon>
        <taxon>Dikarya</taxon>
        <taxon>Ascomycota</taxon>
        <taxon>Saccharomycotina</taxon>
        <taxon>Saccharomycetes</taxon>
        <taxon>Saccharomycetales</taxon>
        <taxon>Saccharomycetaceae</taxon>
        <taxon>Saccharomyces</taxon>
    </lineage>
</organism>
<sequence length="793" mass="88533">MVIQTATTLSPAKARPSFPHNDLIKSMSDSLISRPTHPPIRKLKSSLKISHPEPISRSKSEIFCTSPEKNVRFAIELTTVKRFDKNAEPSSISNENSPTLSPVDSNTAADDVQLFNNEDCWFNDSSLVTNLLKNEKKFRYMNSLNNMFKLDLYDSEDEDDIDEHINSQAEYGYTYNSLSTRGKTSENKSATSSLATQATNICDWKLHCTDLVPFKIAPPLFTKTLSASDLQGQLTKYLNGQNVKLHSLTQLGDDSSKITGLVYVKNLSFEKYLEIKFTFNSWRDIHYVTANFNRTINSNVDEFKFTIDLNSLKYILLIKRIITMEKNTSSCPLNIELCCRYDVNNETYYDNNNGKNYHLFMTTFKKGGETKEKIPVVVEPASQTDAAMSPKEMKARFVSSNPTLSRFLPQSRKFSEDTDYYNTSPLKHLYHNDTTSWVKPKRLNVVLDKLENATPPPPSSALANDTARTGKITKDKNNVLAPPTASNSIDLPILGSQHQSLYSGSSSYSSSSSSISSSLSFASSNNSSTNSSSASCSFPLTELDNFDYANLYEPNDTFTTANLFNHSLNSLMPEISTPSFFGGFRNENTINNNDSKNLVTSLEDSYEDKQSVITDTTMDENNKTSTINNSTDTLIKPSKENGTVKENKSSANSTSAPSSSQNRASTILNDHSNGKSDLKYVNYQSLLDSHCFYNHPSSPNLQSTSFSSAAPFSGISQASDIFDYENEDSDSNQIAGEIDNNSFPPHFYLDEDDKSACLSDDALIDHHRNTNPFINTFSSSPPILSQEVDRWRL</sequence>
<keyword id="KW-0320">Glycogen biosynthesis</keyword>
<keyword id="KW-0597">Phosphoprotein</keyword>
<keyword id="KW-1185">Reference proteome</keyword>
<accession>P28006</accession>
<accession>D6W2N4</accession>
<accession>Q08551</accession>